<sequence length="370" mass="40941">MQFELLSTSAGARRGRLTLAHGAVETPVFMPVGTYGTVKAMTPAMLSDVGAQICLGNTFHLWLRPGLDIVGAHGGLHRFMGWDKPILTDSGGFQVFSLGALRKISEEGVKFASPIDGARLFLTPEISMQIQTVLNSDVVMIFDECTPYPATRDEAAKSMRLSRRWARRSRDEFDRLENANALFGIVQGGMYEDLRDESLGALQDIGFHGFAIGGLSVGEPKDDMARILAHTAPRLPADKPRYLMGVGTPEDIVDGIANGIDMFDCVMPTRNARNGWLFTRYGDLKIKNAVHKADTRPLDPSCSCYTCRNFSRSYLHHLHRAGEILGSMLNTVHNLHYYQTLTAELRDAIAADRFADYVTRFRSERATGAH</sequence>
<feature type="chain" id="PRO_1000016762" description="Queuine tRNA-ribosyltransferase">
    <location>
        <begin position="1"/>
        <end position="370"/>
    </location>
</feature>
<feature type="region of interest" description="RNA binding" evidence="1">
    <location>
        <begin position="245"/>
        <end position="251"/>
    </location>
</feature>
<feature type="region of interest" description="RNA binding; important for wobble base 34 recognition" evidence="1">
    <location>
        <begin position="269"/>
        <end position="273"/>
    </location>
</feature>
<feature type="active site" description="Proton acceptor" evidence="1">
    <location>
        <position position="89"/>
    </location>
</feature>
<feature type="active site" description="Nucleophile" evidence="1">
    <location>
        <position position="264"/>
    </location>
</feature>
<feature type="binding site" evidence="1">
    <location>
        <begin position="89"/>
        <end position="93"/>
    </location>
    <ligand>
        <name>substrate</name>
    </ligand>
</feature>
<feature type="binding site" evidence="1">
    <location>
        <position position="143"/>
    </location>
    <ligand>
        <name>substrate</name>
    </ligand>
</feature>
<feature type="binding site" evidence="1">
    <location>
        <position position="187"/>
    </location>
    <ligand>
        <name>substrate</name>
    </ligand>
</feature>
<feature type="binding site" evidence="1">
    <location>
        <position position="214"/>
    </location>
    <ligand>
        <name>substrate</name>
    </ligand>
</feature>
<feature type="binding site" evidence="1">
    <location>
        <position position="302"/>
    </location>
    <ligand>
        <name>Zn(2+)</name>
        <dbReference type="ChEBI" id="CHEBI:29105"/>
    </ligand>
</feature>
<feature type="binding site" evidence="1">
    <location>
        <position position="304"/>
    </location>
    <ligand>
        <name>Zn(2+)</name>
        <dbReference type="ChEBI" id="CHEBI:29105"/>
    </ligand>
</feature>
<feature type="binding site" evidence="1">
    <location>
        <position position="307"/>
    </location>
    <ligand>
        <name>Zn(2+)</name>
        <dbReference type="ChEBI" id="CHEBI:29105"/>
    </ligand>
</feature>
<feature type="binding site" evidence="1">
    <location>
        <position position="333"/>
    </location>
    <ligand>
        <name>Zn(2+)</name>
        <dbReference type="ChEBI" id="CHEBI:29105"/>
    </ligand>
</feature>
<organism>
    <name type="scientific">Azoarcus sp. (strain BH72)</name>
    <dbReference type="NCBI Taxonomy" id="418699"/>
    <lineage>
        <taxon>Bacteria</taxon>
        <taxon>Pseudomonadati</taxon>
        <taxon>Pseudomonadota</taxon>
        <taxon>Betaproteobacteria</taxon>
        <taxon>Rhodocyclales</taxon>
        <taxon>Zoogloeaceae</taxon>
        <taxon>Azoarcus</taxon>
    </lineage>
</organism>
<gene>
    <name evidence="1" type="primary">tgt</name>
    <name type="ordered locus">azo0907</name>
</gene>
<dbReference type="EC" id="2.4.2.29" evidence="1"/>
<dbReference type="EMBL" id="AM406670">
    <property type="protein sequence ID" value="CAL93524.1"/>
    <property type="molecule type" value="Genomic_DNA"/>
</dbReference>
<dbReference type="RefSeq" id="WP_011764641.1">
    <property type="nucleotide sequence ID" value="NC_008702.1"/>
</dbReference>
<dbReference type="SMR" id="A1K3W9"/>
<dbReference type="STRING" id="62928.azo0907"/>
<dbReference type="KEGG" id="azo:azo0907"/>
<dbReference type="eggNOG" id="COG0343">
    <property type="taxonomic scope" value="Bacteria"/>
</dbReference>
<dbReference type="HOGENOM" id="CLU_022060_0_1_4"/>
<dbReference type="UniPathway" id="UPA00392"/>
<dbReference type="Proteomes" id="UP000002588">
    <property type="component" value="Chromosome"/>
</dbReference>
<dbReference type="GO" id="GO:0005829">
    <property type="term" value="C:cytosol"/>
    <property type="evidence" value="ECO:0007669"/>
    <property type="project" value="TreeGrafter"/>
</dbReference>
<dbReference type="GO" id="GO:0046872">
    <property type="term" value="F:metal ion binding"/>
    <property type="evidence" value="ECO:0007669"/>
    <property type="project" value="UniProtKB-KW"/>
</dbReference>
<dbReference type="GO" id="GO:0008479">
    <property type="term" value="F:tRNA-guanosine(34) queuine transglycosylase activity"/>
    <property type="evidence" value="ECO:0007669"/>
    <property type="project" value="UniProtKB-UniRule"/>
</dbReference>
<dbReference type="GO" id="GO:0008616">
    <property type="term" value="P:queuosine biosynthetic process"/>
    <property type="evidence" value="ECO:0007669"/>
    <property type="project" value="UniProtKB-UniRule"/>
</dbReference>
<dbReference type="GO" id="GO:0002099">
    <property type="term" value="P:tRNA wobble guanine modification"/>
    <property type="evidence" value="ECO:0007669"/>
    <property type="project" value="TreeGrafter"/>
</dbReference>
<dbReference type="GO" id="GO:0101030">
    <property type="term" value="P:tRNA-guanine transglycosylation"/>
    <property type="evidence" value="ECO:0007669"/>
    <property type="project" value="InterPro"/>
</dbReference>
<dbReference type="FunFam" id="3.20.20.105:FF:000001">
    <property type="entry name" value="Queuine tRNA-ribosyltransferase"/>
    <property type="match status" value="1"/>
</dbReference>
<dbReference type="Gene3D" id="3.20.20.105">
    <property type="entry name" value="Queuine tRNA-ribosyltransferase-like"/>
    <property type="match status" value="1"/>
</dbReference>
<dbReference type="HAMAP" id="MF_00168">
    <property type="entry name" value="Q_tRNA_Tgt"/>
    <property type="match status" value="1"/>
</dbReference>
<dbReference type="InterPro" id="IPR050076">
    <property type="entry name" value="ArchSynthase1/Queuine_TRR"/>
</dbReference>
<dbReference type="InterPro" id="IPR004803">
    <property type="entry name" value="TGT"/>
</dbReference>
<dbReference type="InterPro" id="IPR036511">
    <property type="entry name" value="TGT-like_sf"/>
</dbReference>
<dbReference type="InterPro" id="IPR002616">
    <property type="entry name" value="tRNA_ribo_trans-like"/>
</dbReference>
<dbReference type="NCBIfam" id="TIGR00430">
    <property type="entry name" value="Q_tRNA_tgt"/>
    <property type="match status" value="1"/>
</dbReference>
<dbReference type="NCBIfam" id="TIGR00449">
    <property type="entry name" value="tgt_general"/>
    <property type="match status" value="1"/>
</dbReference>
<dbReference type="PANTHER" id="PTHR46499">
    <property type="entry name" value="QUEUINE TRNA-RIBOSYLTRANSFERASE"/>
    <property type="match status" value="1"/>
</dbReference>
<dbReference type="PANTHER" id="PTHR46499:SF1">
    <property type="entry name" value="QUEUINE TRNA-RIBOSYLTRANSFERASE"/>
    <property type="match status" value="1"/>
</dbReference>
<dbReference type="Pfam" id="PF01702">
    <property type="entry name" value="TGT"/>
    <property type="match status" value="1"/>
</dbReference>
<dbReference type="SUPFAM" id="SSF51713">
    <property type="entry name" value="tRNA-guanine transglycosylase"/>
    <property type="match status" value="1"/>
</dbReference>
<evidence type="ECO:0000255" key="1">
    <source>
        <dbReference type="HAMAP-Rule" id="MF_00168"/>
    </source>
</evidence>
<comment type="function">
    <text evidence="1">Catalyzes the base-exchange of a guanine (G) residue with the queuine precursor 7-aminomethyl-7-deazaguanine (PreQ1) at position 34 (anticodon wobble position) in tRNAs with GU(N) anticodons (tRNA-Asp, -Asn, -His and -Tyr). Catalysis occurs through a double-displacement mechanism. The nucleophile active site attacks the C1' of nucleotide 34 to detach the guanine base from the RNA, forming a covalent enzyme-RNA intermediate. The proton acceptor active site deprotonates the incoming PreQ1, allowing a nucleophilic attack on the C1' of the ribose to form the product. After dissociation, two additional enzymatic reactions on the tRNA convert PreQ1 to queuine (Q), resulting in the hypermodified nucleoside queuosine (7-(((4,5-cis-dihydroxy-2-cyclopenten-1-yl)amino)methyl)-7-deazaguanosine).</text>
</comment>
<comment type="catalytic activity">
    <reaction evidence="1">
        <text>7-aminomethyl-7-carbaguanine + guanosine(34) in tRNA = 7-aminomethyl-7-carbaguanosine(34) in tRNA + guanine</text>
        <dbReference type="Rhea" id="RHEA:24104"/>
        <dbReference type="Rhea" id="RHEA-COMP:10341"/>
        <dbReference type="Rhea" id="RHEA-COMP:10342"/>
        <dbReference type="ChEBI" id="CHEBI:16235"/>
        <dbReference type="ChEBI" id="CHEBI:58703"/>
        <dbReference type="ChEBI" id="CHEBI:74269"/>
        <dbReference type="ChEBI" id="CHEBI:82833"/>
        <dbReference type="EC" id="2.4.2.29"/>
    </reaction>
</comment>
<comment type="cofactor">
    <cofactor evidence="1">
        <name>Zn(2+)</name>
        <dbReference type="ChEBI" id="CHEBI:29105"/>
    </cofactor>
    <text evidence="1">Binds 1 zinc ion per subunit.</text>
</comment>
<comment type="pathway">
    <text evidence="1">tRNA modification; tRNA-queuosine biosynthesis.</text>
</comment>
<comment type="subunit">
    <text evidence="1">Homodimer. Within each dimer, one monomer is responsible for RNA recognition and catalysis, while the other monomer binds to the replacement base PreQ1.</text>
</comment>
<comment type="similarity">
    <text evidence="1">Belongs to the queuine tRNA-ribosyltransferase family.</text>
</comment>
<accession>A1K3W9</accession>
<protein>
    <recommendedName>
        <fullName evidence="1">Queuine tRNA-ribosyltransferase</fullName>
        <ecNumber evidence="1">2.4.2.29</ecNumber>
    </recommendedName>
    <alternativeName>
        <fullName evidence="1">Guanine insertion enzyme</fullName>
    </alternativeName>
    <alternativeName>
        <fullName evidence="1">tRNA-guanine transglycosylase</fullName>
    </alternativeName>
</protein>
<reference key="1">
    <citation type="journal article" date="2006" name="Nat. Biotechnol.">
        <title>Complete genome of the mutualistic, N2-fixing grass endophyte Azoarcus sp. strain BH72.</title>
        <authorList>
            <person name="Krause A."/>
            <person name="Ramakumar A."/>
            <person name="Bartels D."/>
            <person name="Battistoni F."/>
            <person name="Bekel T."/>
            <person name="Boch J."/>
            <person name="Boehm M."/>
            <person name="Friedrich F."/>
            <person name="Hurek T."/>
            <person name="Krause L."/>
            <person name="Linke B."/>
            <person name="McHardy A.C."/>
            <person name="Sarkar A."/>
            <person name="Schneiker S."/>
            <person name="Syed A.A."/>
            <person name="Thauer R."/>
            <person name="Vorhoelter F.-J."/>
            <person name="Weidner S."/>
            <person name="Puehler A."/>
            <person name="Reinhold-Hurek B."/>
            <person name="Kaiser O."/>
            <person name="Goesmann A."/>
        </authorList>
    </citation>
    <scope>NUCLEOTIDE SEQUENCE [LARGE SCALE GENOMIC DNA]</scope>
    <source>
        <strain>BH72</strain>
    </source>
</reference>
<proteinExistence type="inferred from homology"/>
<keyword id="KW-0328">Glycosyltransferase</keyword>
<keyword id="KW-0479">Metal-binding</keyword>
<keyword id="KW-0671">Queuosine biosynthesis</keyword>
<keyword id="KW-1185">Reference proteome</keyword>
<keyword id="KW-0808">Transferase</keyword>
<keyword id="KW-0819">tRNA processing</keyword>
<keyword id="KW-0862">Zinc</keyword>
<name>TGT_AZOSB</name>